<name>INV7_ORYSI</name>
<keyword id="KW-0052">Apoplast</keyword>
<keyword id="KW-0134">Cell wall</keyword>
<keyword id="KW-1015">Disulfide bond</keyword>
<keyword id="KW-0325">Glycoprotein</keyword>
<keyword id="KW-0326">Glycosidase</keyword>
<keyword id="KW-0378">Hydrolase</keyword>
<keyword id="KW-1185">Reference proteome</keyword>
<keyword id="KW-0964">Secreted</keyword>
<keyword id="KW-0732">Signal</keyword>
<evidence type="ECO:0000250" key="1"/>
<evidence type="ECO:0000255" key="2"/>
<evidence type="ECO:0000305" key="3"/>
<dbReference type="EC" id="3.2.1.26"/>
<dbReference type="EMBL" id="AF155121">
    <property type="protein sequence ID" value="AAD38399.1"/>
    <property type="status" value="ALT_FRAME"/>
    <property type="molecule type" value="Genomic_DNA"/>
</dbReference>
<dbReference type="EMBL" id="CM000134">
    <property type="status" value="NOT_ANNOTATED_CDS"/>
    <property type="molecule type" value="Genomic_DNA"/>
</dbReference>
<dbReference type="EMBL" id="AY575555">
    <property type="protein sequence ID" value="AAV28806.1"/>
    <property type="status" value="ALT_FRAME"/>
    <property type="molecule type" value="mRNA"/>
</dbReference>
<dbReference type="SMR" id="A2YZ01"/>
<dbReference type="STRING" id="39946.A2YZ01"/>
<dbReference type="CAZy" id="GH32">
    <property type="family name" value="Glycoside Hydrolase Family 32"/>
</dbReference>
<dbReference type="GlyCosmos" id="A2YZ01">
    <property type="glycosylation" value="3 sites, No reported glycans"/>
</dbReference>
<dbReference type="Proteomes" id="UP000007015">
    <property type="component" value="Chromosome 9"/>
</dbReference>
<dbReference type="GO" id="GO:0048046">
    <property type="term" value="C:apoplast"/>
    <property type="evidence" value="ECO:0007669"/>
    <property type="project" value="UniProtKB-SubCell"/>
</dbReference>
<dbReference type="GO" id="GO:0004564">
    <property type="term" value="F:beta-fructofuranosidase activity"/>
    <property type="evidence" value="ECO:0007669"/>
    <property type="project" value="UniProtKB-EC"/>
</dbReference>
<dbReference type="GO" id="GO:0005975">
    <property type="term" value="P:carbohydrate metabolic process"/>
    <property type="evidence" value="ECO:0007669"/>
    <property type="project" value="InterPro"/>
</dbReference>
<dbReference type="CDD" id="cd18624">
    <property type="entry name" value="GH32_Fruct1-like"/>
    <property type="match status" value="1"/>
</dbReference>
<dbReference type="FunFam" id="2.60.120.560:FF:000002">
    <property type="entry name" value="Beta-fructofuranosidase, insoluble isoenzyme CWINV1"/>
    <property type="match status" value="1"/>
</dbReference>
<dbReference type="Gene3D" id="2.60.120.560">
    <property type="entry name" value="Exo-inulinase, domain 1"/>
    <property type="match status" value="1"/>
</dbReference>
<dbReference type="Gene3D" id="2.115.10.20">
    <property type="entry name" value="Glycosyl hydrolase domain, family 43"/>
    <property type="match status" value="1"/>
</dbReference>
<dbReference type="InterPro" id="IPR013320">
    <property type="entry name" value="ConA-like_dom_sf"/>
</dbReference>
<dbReference type="InterPro" id="IPR050551">
    <property type="entry name" value="Fructan_Metab_Enzymes"/>
</dbReference>
<dbReference type="InterPro" id="IPR001362">
    <property type="entry name" value="Glyco_hydro_32"/>
</dbReference>
<dbReference type="InterPro" id="IPR013189">
    <property type="entry name" value="Glyco_hydro_32_C"/>
</dbReference>
<dbReference type="InterPro" id="IPR013148">
    <property type="entry name" value="Glyco_hydro_32_N"/>
</dbReference>
<dbReference type="InterPro" id="IPR023296">
    <property type="entry name" value="Glyco_hydro_beta-prop_sf"/>
</dbReference>
<dbReference type="PANTHER" id="PTHR31953">
    <property type="entry name" value="BETA-FRUCTOFURANOSIDASE, INSOLUBLE ISOENZYME CWINV1-RELATED"/>
    <property type="match status" value="1"/>
</dbReference>
<dbReference type="Pfam" id="PF08244">
    <property type="entry name" value="Glyco_hydro_32C"/>
    <property type="match status" value="1"/>
</dbReference>
<dbReference type="Pfam" id="PF00251">
    <property type="entry name" value="Glyco_hydro_32N"/>
    <property type="match status" value="1"/>
</dbReference>
<dbReference type="SMART" id="SM00640">
    <property type="entry name" value="Glyco_32"/>
    <property type="match status" value="1"/>
</dbReference>
<dbReference type="SUPFAM" id="SSF75005">
    <property type="entry name" value="Arabinanase/levansucrase/invertase"/>
    <property type="match status" value="1"/>
</dbReference>
<dbReference type="SUPFAM" id="SSF49899">
    <property type="entry name" value="Concanavalin A-like lectins/glucanases"/>
    <property type="match status" value="1"/>
</dbReference>
<comment type="function">
    <text evidence="1">May play a role in sucrose partitioning during seed development.</text>
</comment>
<comment type="catalytic activity">
    <reaction>
        <text>Hydrolysis of terminal non-reducing beta-D-fructofuranoside residues in beta-D-fructofuranosides.</text>
        <dbReference type="EC" id="3.2.1.26"/>
    </reaction>
</comment>
<comment type="subcellular location">
    <subcellularLocation>
        <location evidence="3">Secreted</location>
        <location evidence="3">Extracellular space</location>
        <location evidence="3">Apoplast</location>
    </subcellularLocation>
    <subcellularLocation>
        <location evidence="3">Secreted</location>
        <location evidence="3">Cell wall</location>
    </subcellularLocation>
    <text evidence="3">Associated to the cell wall.</text>
</comment>
<comment type="similarity">
    <text evidence="3">Belongs to the glycosyl hydrolase 32 family.</text>
</comment>
<comment type="sequence caution" evidence="3">
    <conflict type="frameshift">
        <sequence resource="EMBL-CDS" id="AAD38399"/>
    </conflict>
</comment>
<comment type="sequence caution" evidence="3">
    <conflict type="frameshift">
        <sequence resource="EMBL-CDS" id="AAV28806"/>
    </conflict>
</comment>
<reference key="1">
    <citation type="submission" date="1999-05" db="EMBL/GenBank/DDBJ databases">
        <title>Cloning of rice invertase genes.</title>
        <authorList>
            <person name="Fernandes S.Q."/>
            <person name="Dennis E.S."/>
            <person name="Dolferus R."/>
        </authorList>
    </citation>
    <scope>NUCLEOTIDE SEQUENCE [GENOMIC DNA]</scope>
    <source>
        <strain>cv. IR36</strain>
    </source>
</reference>
<reference key="2">
    <citation type="journal article" date="2005" name="PLoS Biol.">
        <title>The genomes of Oryza sativa: a history of duplications.</title>
        <authorList>
            <person name="Yu J."/>
            <person name="Wang J."/>
            <person name="Lin W."/>
            <person name="Li S."/>
            <person name="Li H."/>
            <person name="Zhou J."/>
            <person name="Ni P."/>
            <person name="Dong W."/>
            <person name="Hu S."/>
            <person name="Zeng C."/>
            <person name="Zhang J."/>
            <person name="Zhang Y."/>
            <person name="Li R."/>
            <person name="Xu Z."/>
            <person name="Li S."/>
            <person name="Li X."/>
            <person name="Zheng H."/>
            <person name="Cong L."/>
            <person name="Lin L."/>
            <person name="Yin J."/>
            <person name="Geng J."/>
            <person name="Li G."/>
            <person name="Shi J."/>
            <person name="Liu J."/>
            <person name="Lv H."/>
            <person name="Li J."/>
            <person name="Wang J."/>
            <person name="Deng Y."/>
            <person name="Ran L."/>
            <person name="Shi X."/>
            <person name="Wang X."/>
            <person name="Wu Q."/>
            <person name="Li C."/>
            <person name="Ren X."/>
            <person name="Wang J."/>
            <person name="Wang X."/>
            <person name="Li D."/>
            <person name="Liu D."/>
            <person name="Zhang X."/>
            <person name="Ji Z."/>
            <person name="Zhao W."/>
            <person name="Sun Y."/>
            <person name="Zhang Z."/>
            <person name="Bao J."/>
            <person name="Han Y."/>
            <person name="Dong L."/>
            <person name="Ji J."/>
            <person name="Chen P."/>
            <person name="Wu S."/>
            <person name="Liu J."/>
            <person name="Xiao Y."/>
            <person name="Bu D."/>
            <person name="Tan J."/>
            <person name="Yang L."/>
            <person name="Ye C."/>
            <person name="Zhang J."/>
            <person name="Xu J."/>
            <person name="Zhou Y."/>
            <person name="Yu Y."/>
            <person name="Zhang B."/>
            <person name="Zhuang S."/>
            <person name="Wei H."/>
            <person name="Liu B."/>
            <person name="Lei M."/>
            <person name="Yu H."/>
            <person name="Li Y."/>
            <person name="Xu H."/>
            <person name="Wei S."/>
            <person name="He X."/>
            <person name="Fang L."/>
            <person name="Zhang Z."/>
            <person name="Zhang Y."/>
            <person name="Huang X."/>
            <person name="Su Z."/>
            <person name="Tong W."/>
            <person name="Li J."/>
            <person name="Tong Z."/>
            <person name="Li S."/>
            <person name="Ye J."/>
            <person name="Wang L."/>
            <person name="Fang L."/>
            <person name="Lei T."/>
            <person name="Chen C.-S."/>
            <person name="Chen H.-C."/>
            <person name="Xu Z."/>
            <person name="Li H."/>
            <person name="Huang H."/>
            <person name="Zhang F."/>
            <person name="Xu H."/>
            <person name="Li N."/>
            <person name="Zhao C."/>
            <person name="Li S."/>
            <person name="Dong L."/>
            <person name="Huang Y."/>
            <person name="Li L."/>
            <person name="Xi Y."/>
            <person name="Qi Q."/>
            <person name="Li W."/>
            <person name="Zhang B."/>
            <person name="Hu W."/>
            <person name="Zhang Y."/>
            <person name="Tian X."/>
            <person name="Jiao Y."/>
            <person name="Liang X."/>
            <person name="Jin J."/>
            <person name="Gao L."/>
            <person name="Zheng W."/>
            <person name="Hao B."/>
            <person name="Liu S.-M."/>
            <person name="Wang W."/>
            <person name="Yuan L."/>
            <person name="Cao M."/>
            <person name="McDermott J."/>
            <person name="Samudrala R."/>
            <person name="Wang J."/>
            <person name="Wong G.K.-S."/>
            <person name="Yang H."/>
        </authorList>
    </citation>
    <scope>NUCLEOTIDE SEQUENCE [LARGE SCALE GENOMIC DNA]</scope>
    <source>
        <strain>cv. 93-11</strain>
    </source>
</reference>
<reference key="3">
    <citation type="submission" date="2004-03" db="EMBL/GenBank/DDBJ databases">
        <title>Evolution of rice invertase gene family.</title>
        <authorList>
            <person name="Ji X."/>
            <person name="Kathiresan A."/>
            <person name="Bennett J."/>
        </authorList>
    </citation>
    <scope>NUCLEOTIDE SEQUENCE [MRNA] OF 503-596</scope>
    <source>
        <strain>cv. IR64</strain>
    </source>
</reference>
<accession>A2YZ01</accession>
<accession>Q56UC9</accession>
<accession>Q56UM5</accession>
<accession>Q6K311</accession>
<accession>Q9XGV7</accession>
<protein>
    <recommendedName>
        <fullName>Beta-fructofuranosidase, insoluble isoenzyme 7</fullName>
        <ecNumber>3.2.1.26</ecNumber>
    </recommendedName>
    <alternativeName>
        <fullName>Cell wall beta-fructosidase 7</fullName>
    </alternativeName>
    <alternativeName>
        <fullName>Invertase 7</fullName>
    </alternativeName>
    <alternativeName>
        <fullName>OsCIN7</fullName>
    </alternativeName>
    <alternativeName>
        <fullName>Sucrose hydrolase 7</fullName>
    </alternativeName>
</protein>
<organism>
    <name type="scientific">Oryza sativa subsp. indica</name>
    <name type="common">Rice</name>
    <dbReference type="NCBI Taxonomy" id="39946"/>
    <lineage>
        <taxon>Eukaryota</taxon>
        <taxon>Viridiplantae</taxon>
        <taxon>Streptophyta</taxon>
        <taxon>Embryophyta</taxon>
        <taxon>Tracheophyta</taxon>
        <taxon>Spermatophyta</taxon>
        <taxon>Magnoliopsida</taxon>
        <taxon>Liliopsida</taxon>
        <taxon>Poales</taxon>
        <taxon>Poaceae</taxon>
        <taxon>BOP clade</taxon>
        <taxon>Oryzoideae</taxon>
        <taxon>Oryzeae</taxon>
        <taxon>Oryzinae</taxon>
        <taxon>Oryza</taxon>
        <taxon>Oryza sativa</taxon>
    </lineage>
</organism>
<sequence length="596" mass="65561">MARLGLAVCAASFHLFLLLASTSSLRRAPTEADTANHARRTAYHFQPAKNWQNDPNGPMYHNGMYHLFYQYNPHSALWDIGNLSWGHSVSGDLLNWAALDTALDPTSPFDANGCWSGSATILPGALPAILYTGIDASKEQVQNVAFAKNPSDPLLREWEKPAYNPVIALPADVPGDKFRDPSTAWLGRDGLWRIAVSAEVDGVASTLVYRSKDFVRWERNAAPLHASRAAGMVECPDLFPVAERGEDGLDTSANGAGGVRHVLKLSVMDTLQDYYMVGTYDDAADAFSPAEPERGDDCRSWRRLDYGHLYASKSFFDVRKNRRVLWAWANESDSQADDVARGWSGVQTFPRKMWLAKDGKQLLQWPIEEIETLRRKRAGLWRGTRLGVGAVQEIVGVASSQADVEVVFKIPSLEEAERVDDPNRLLDPQKLCGEKGAAVRGGVGPFGLLVMASGDLHEHTAVFFRVFRHHDKYKLLMCTDLTKSSTRAGVYKPAYGGFVDMDIDDHKTISLRTLIDHSVVESFGGGGRACITARVYPEHVATSSSHLYVFNNGSDAVKVAKLEAWDLATATVNVVVGDHHGLVAPALELEPTRTTQ</sequence>
<feature type="signal peptide" evidence="2">
    <location>
        <begin position="1"/>
        <end position="24"/>
    </location>
</feature>
<feature type="chain" id="PRO_0000303013" description="Beta-fructofuranosidase, insoluble isoenzyme 7">
    <location>
        <begin position="25"/>
        <end position="596"/>
    </location>
</feature>
<feature type="active site" evidence="1">
    <location>
        <position position="54"/>
    </location>
</feature>
<feature type="binding site" evidence="1">
    <location>
        <begin position="51"/>
        <end position="54"/>
    </location>
    <ligand>
        <name>substrate</name>
    </ligand>
</feature>
<feature type="binding site" evidence="1">
    <location>
        <position position="70"/>
    </location>
    <ligand>
        <name>substrate</name>
    </ligand>
</feature>
<feature type="binding site" evidence="1">
    <location>
        <position position="78"/>
    </location>
    <ligand>
        <name>substrate</name>
    </ligand>
</feature>
<feature type="binding site" evidence="1">
    <location>
        <begin position="115"/>
        <end position="116"/>
    </location>
    <ligand>
        <name>substrate</name>
    </ligand>
</feature>
<feature type="binding site" evidence="1">
    <location>
        <begin position="179"/>
        <end position="180"/>
    </location>
    <ligand>
        <name>substrate</name>
    </ligand>
</feature>
<feature type="binding site" evidence="1">
    <location>
        <position position="234"/>
    </location>
    <ligand>
        <name>substrate</name>
    </ligand>
</feature>
<feature type="glycosylation site" description="N-linked (GlcNAc...) asparagine" evidence="2">
    <location>
        <position position="82"/>
    </location>
</feature>
<feature type="glycosylation site" description="N-linked (GlcNAc...) asparagine" evidence="2">
    <location>
        <position position="330"/>
    </location>
</feature>
<feature type="glycosylation site" description="N-linked (GlcNAc...) asparagine" evidence="2">
    <location>
        <position position="552"/>
    </location>
</feature>
<feature type="disulfide bond" evidence="1">
    <location>
        <begin position="432"/>
        <end position="478"/>
    </location>
</feature>
<feature type="sequence conflict" description="In Ref. 2; CM000134." evidence="3" ref="2">
    <location>
        <position position="19"/>
    </location>
</feature>
<feature type="sequence conflict" description="In Ref. 1; AAD38399." evidence="3" ref="1">
    <original>T</original>
    <variation>I</variation>
    <location>
        <position position="22"/>
    </location>
</feature>
<feature type="sequence conflict" description="In Ref. 1; AAD38399." evidence="3" ref="1">
    <original>L</original>
    <variation>V</variation>
    <location>
        <position position="309"/>
    </location>
</feature>
<feature type="sequence conflict" description="In Ref. 1; AAD38399." evidence="3" ref="1">
    <original>V</original>
    <variation>A</variation>
    <location>
        <position position="318"/>
    </location>
</feature>
<feature type="sequence conflict" description="In Ref. 1; AAD38399." evidence="3" ref="1">
    <original>W</original>
    <variation>R</variation>
    <location>
        <position position="381"/>
    </location>
</feature>
<feature type="sequence conflict" description="In Ref. 1; AAD38399." evidence="3" ref="1">
    <original>V</original>
    <variation>A</variation>
    <location>
        <position position="388"/>
    </location>
</feature>
<gene>
    <name type="primary">CIN7</name>
    <name type="synonym">INV1</name>
    <name type="ORF">OsI_029544</name>
</gene>
<proteinExistence type="evidence at transcript level"/>